<comment type="function">
    <text evidence="1">Binds 23S rRNA and is also seen to make contacts with the A and possibly P site tRNAs.</text>
</comment>
<comment type="subunit">
    <text evidence="1">Part of the 50S ribosomal subunit.</text>
</comment>
<comment type="similarity">
    <text evidence="1">Belongs to the universal ribosomal protein uL16 family.</text>
</comment>
<gene>
    <name evidence="1" type="primary">rplP</name>
    <name type="ordered locus">Ping_3517</name>
</gene>
<dbReference type="EMBL" id="CP000510">
    <property type="protein sequence ID" value="ABM05200.1"/>
    <property type="molecule type" value="Genomic_DNA"/>
</dbReference>
<dbReference type="RefSeq" id="WP_011771748.1">
    <property type="nucleotide sequence ID" value="NC_008709.1"/>
</dbReference>
<dbReference type="SMR" id="A1T0D5"/>
<dbReference type="STRING" id="357804.Ping_3517"/>
<dbReference type="KEGG" id="pin:Ping_3517"/>
<dbReference type="eggNOG" id="COG0197">
    <property type="taxonomic scope" value="Bacteria"/>
</dbReference>
<dbReference type="HOGENOM" id="CLU_078858_2_1_6"/>
<dbReference type="OrthoDB" id="9802589at2"/>
<dbReference type="Proteomes" id="UP000000639">
    <property type="component" value="Chromosome"/>
</dbReference>
<dbReference type="GO" id="GO:0022625">
    <property type="term" value="C:cytosolic large ribosomal subunit"/>
    <property type="evidence" value="ECO:0007669"/>
    <property type="project" value="TreeGrafter"/>
</dbReference>
<dbReference type="GO" id="GO:0019843">
    <property type="term" value="F:rRNA binding"/>
    <property type="evidence" value="ECO:0007669"/>
    <property type="project" value="UniProtKB-UniRule"/>
</dbReference>
<dbReference type="GO" id="GO:0003735">
    <property type="term" value="F:structural constituent of ribosome"/>
    <property type="evidence" value="ECO:0007669"/>
    <property type="project" value="InterPro"/>
</dbReference>
<dbReference type="GO" id="GO:0000049">
    <property type="term" value="F:tRNA binding"/>
    <property type="evidence" value="ECO:0007669"/>
    <property type="project" value="UniProtKB-KW"/>
</dbReference>
<dbReference type="GO" id="GO:0006412">
    <property type="term" value="P:translation"/>
    <property type="evidence" value="ECO:0007669"/>
    <property type="project" value="UniProtKB-UniRule"/>
</dbReference>
<dbReference type="CDD" id="cd01433">
    <property type="entry name" value="Ribosomal_L16_L10e"/>
    <property type="match status" value="1"/>
</dbReference>
<dbReference type="FunFam" id="3.90.1170.10:FF:000001">
    <property type="entry name" value="50S ribosomal protein L16"/>
    <property type="match status" value="1"/>
</dbReference>
<dbReference type="Gene3D" id="3.90.1170.10">
    <property type="entry name" value="Ribosomal protein L10e/L16"/>
    <property type="match status" value="1"/>
</dbReference>
<dbReference type="HAMAP" id="MF_01342">
    <property type="entry name" value="Ribosomal_uL16"/>
    <property type="match status" value="1"/>
</dbReference>
<dbReference type="InterPro" id="IPR047873">
    <property type="entry name" value="Ribosomal_uL16"/>
</dbReference>
<dbReference type="InterPro" id="IPR000114">
    <property type="entry name" value="Ribosomal_uL16_bact-type"/>
</dbReference>
<dbReference type="InterPro" id="IPR020798">
    <property type="entry name" value="Ribosomal_uL16_CS"/>
</dbReference>
<dbReference type="InterPro" id="IPR016180">
    <property type="entry name" value="Ribosomal_uL16_dom"/>
</dbReference>
<dbReference type="InterPro" id="IPR036920">
    <property type="entry name" value="Ribosomal_uL16_sf"/>
</dbReference>
<dbReference type="NCBIfam" id="TIGR01164">
    <property type="entry name" value="rplP_bact"/>
    <property type="match status" value="1"/>
</dbReference>
<dbReference type="PANTHER" id="PTHR12220">
    <property type="entry name" value="50S/60S RIBOSOMAL PROTEIN L16"/>
    <property type="match status" value="1"/>
</dbReference>
<dbReference type="PANTHER" id="PTHR12220:SF13">
    <property type="entry name" value="LARGE RIBOSOMAL SUBUNIT PROTEIN UL16M"/>
    <property type="match status" value="1"/>
</dbReference>
<dbReference type="Pfam" id="PF00252">
    <property type="entry name" value="Ribosomal_L16"/>
    <property type="match status" value="1"/>
</dbReference>
<dbReference type="PRINTS" id="PR00060">
    <property type="entry name" value="RIBOSOMALL16"/>
</dbReference>
<dbReference type="SUPFAM" id="SSF54686">
    <property type="entry name" value="Ribosomal protein L16p/L10e"/>
    <property type="match status" value="1"/>
</dbReference>
<dbReference type="PROSITE" id="PS00586">
    <property type="entry name" value="RIBOSOMAL_L16_1"/>
    <property type="match status" value="1"/>
</dbReference>
<accession>A1T0D5</accession>
<protein>
    <recommendedName>
        <fullName evidence="1">Large ribosomal subunit protein uL16</fullName>
    </recommendedName>
    <alternativeName>
        <fullName evidence="2">50S ribosomal protein L16</fullName>
    </alternativeName>
</protein>
<keyword id="KW-1185">Reference proteome</keyword>
<keyword id="KW-0687">Ribonucleoprotein</keyword>
<keyword id="KW-0689">Ribosomal protein</keyword>
<keyword id="KW-0694">RNA-binding</keyword>
<keyword id="KW-0699">rRNA-binding</keyword>
<keyword id="KW-0820">tRNA-binding</keyword>
<sequence length="136" mass="15394">MMQPKRMKFRKMFKGRNRGLSKGTEVSFGEFGLKAVGRGRITARQIEAARRAMTRHVKRQGKIWIRVFPDKPITGKPLEVRQGKGKGNVEYYVAQTQPGKVLYEMEGVPEKLAREAFALAAAKLPLATTFVTRKVM</sequence>
<feature type="chain" id="PRO_1000054686" description="Large ribosomal subunit protein uL16">
    <location>
        <begin position="1"/>
        <end position="136"/>
    </location>
</feature>
<name>RL16_PSYIN</name>
<evidence type="ECO:0000255" key="1">
    <source>
        <dbReference type="HAMAP-Rule" id="MF_01342"/>
    </source>
</evidence>
<evidence type="ECO:0000305" key="2"/>
<reference key="1">
    <citation type="journal article" date="2008" name="BMC Genomics">
        <title>Genomics of an extreme psychrophile, Psychromonas ingrahamii.</title>
        <authorList>
            <person name="Riley M."/>
            <person name="Staley J.T."/>
            <person name="Danchin A."/>
            <person name="Wang T.Z."/>
            <person name="Brettin T.S."/>
            <person name="Hauser L.J."/>
            <person name="Land M.L."/>
            <person name="Thompson L.S."/>
        </authorList>
    </citation>
    <scope>NUCLEOTIDE SEQUENCE [LARGE SCALE GENOMIC DNA]</scope>
    <source>
        <strain>DSM 17664 / CCUG 51855 / 37</strain>
    </source>
</reference>
<organism>
    <name type="scientific">Psychromonas ingrahamii (strain DSM 17664 / CCUG 51855 / 37)</name>
    <dbReference type="NCBI Taxonomy" id="357804"/>
    <lineage>
        <taxon>Bacteria</taxon>
        <taxon>Pseudomonadati</taxon>
        <taxon>Pseudomonadota</taxon>
        <taxon>Gammaproteobacteria</taxon>
        <taxon>Alteromonadales</taxon>
        <taxon>Psychromonadaceae</taxon>
        <taxon>Psychromonas</taxon>
    </lineage>
</organism>
<proteinExistence type="inferred from homology"/>